<dbReference type="EMBL" id="CP001291">
    <property type="protein sequence ID" value="ACK69607.1"/>
    <property type="molecule type" value="Genomic_DNA"/>
</dbReference>
<dbReference type="RefSeq" id="WP_012598553.1">
    <property type="nucleotide sequence ID" value="NC_011729.1"/>
</dbReference>
<dbReference type="SMR" id="B7K739"/>
<dbReference type="STRING" id="65393.PCC7424_1156"/>
<dbReference type="KEGG" id="cyc:PCC7424_1156"/>
<dbReference type="eggNOG" id="COG0509">
    <property type="taxonomic scope" value="Bacteria"/>
</dbReference>
<dbReference type="HOGENOM" id="CLU_097408_2_2_3"/>
<dbReference type="OrthoDB" id="9796712at2"/>
<dbReference type="Proteomes" id="UP000002384">
    <property type="component" value="Chromosome"/>
</dbReference>
<dbReference type="GO" id="GO:0005829">
    <property type="term" value="C:cytosol"/>
    <property type="evidence" value="ECO:0007669"/>
    <property type="project" value="TreeGrafter"/>
</dbReference>
<dbReference type="GO" id="GO:0005960">
    <property type="term" value="C:glycine cleavage complex"/>
    <property type="evidence" value="ECO:0007669"/>
    <property type="project" value="InterPro"/>
</dbReference>
<dbReference type="GO" id="GO:0019464">
    <property type="term" value="P:glycine decarboxylation via glycine cleavage system"/>
    <property type="evidence" value="ECO:0007669"/>
    <property type="project" value="UniProtKB-UniRule"/>
</dbReference>
<dbReference type="CDD" id="cd06848">
    <property type="entry name" value="GCS_H"/>
    <property type="match status" value="1"/>
</dbReference>
<dbReference type="Gene3D" id="2.40.50.100">
    <property type="match status" value="1"/>
</dbReference>
<dbReference type="HAMAP" id="MF_00272">
    <property type="entry name" value="GcvH"/>
    <property type="match status" value="1"/>
</dbReference>
<dbReference type="InterPro" id="IPR003016">
    <property type="entry name" value="2-oxoA_DH_lipoyl-BS"/>
</dbReference>
<dbReference type="InterPro" id="IPR000089">
    <property type="entry name" value="Biotin_lipoyl"/>
</dbReference>
<dbReference type="InterPro" id="IPR002930">
    <property type="entry name" value="GCV_H"/>
</dbReference>
<dbReference type="InterPro" id="IPR033753">
    <property type="entry name" value="GCV_H/Fam206"/>
</dbReference>
<dbReference type="InterPro" id="IPR017453">
    <property type="entry name" value="GCV_H_sub"/>
</dbReference>
<dbReference type="InterPro" id="IPR011053">
    <property type="entry name" value="Single_hybrid_motif"/>
</dbReference>
<dbReference type="NCBIfam" id="TIGR00527">
    <property type="entry name" value="gcvH"/>
    <property type="match status" value="1"/>
</dbReference>
<dbReference type="NCBIfam" id="NF002270">
    <property type="entry name" value="PRK01202.1"/>
    <property type="match status" value="1"/>
</dbReference>
<dbReference type="PANTHER" id="PTHR11715">
    <property type="entry name" value="GLYCINE CLEAVAGE SYSTEM H PROTEIN"/>
    <property type="match status" value="1"/>
</dbReference>
<dbReference type="PANTHER" id="PTHR11715:SF3">
    <property type="entry name" value="GLYCINE CLEAVAGE SYSTEM H PROTEIN-RELATED"/>
    <property type="match status" value="1"/>
</dbReference>
<dbReference type="Pfam" id="PF01597">
    <property type="entry name" value="GCV_H"/>
    <property type="match status" value="1"/>
</dbReference>
<dbReference type="SUPFAM" id="SSF51230">
    <property type="entry name" value="Single hybrid motif"/>
    <property type="match status" value="1"/>
</dbReference>
<dbReference type="PROSITE" id="PS50968">
    <property type="entry name" value="BIOTINYL_LIPOYL"/>
    <property type="match status" value="1"/>
</dbReference>
<dbReference type="PROSITE" id="PS00189">
    <property type="entry name" value="LIPOYL"/>
    <property type="match status" value="1"/>
</dbReference>
<comment type="function">
    <text evidence="1">The glycine cleavage system catalyzes the degradation of glycine. The H protein shuttles the methylamine group of glycine from the P protein to the T protein.</text>
</comment>
<comment type="cofactor">
    <cofactor evidence="1">
        <name>(R)-lipoate</name>
        <dbReference type="ChEBI" id="CHEBI:83088"/>
    </cofactor>
    <text evidence="1">Binds 1 lipoyl cofactor covalently.</text>
</comment>
<comment type="subunit">
    <text evidence="1">The glycine cleavage system is composed of four proteins: P, T, L and H.</text>
</comment>
<comment type="similarity">
    <text evidence="1">Belongs to the GcvH family.</text>
</comment>
<gene>
    <name evidence="1" type="primary">gcvH</name>
    <name type="ordered locus">PCC7424_1156</name>
</gene>
<protein>
    <recommendedName>
        <fullName evidence="1">Glycine cleavage system H protein</fullName>
    </recommendedName>
</protein>
<feature type="chain" id="PRO_1000119295" description="Glycine cleavage system H protein">
    <location>
        <begin position="1"/>
        <end position="131"/>
    </location>
</feature>
<feature type="domain" description="Lipoyl-binding" evidence="2">
    <location>
        <begin position="24"/>
        <end position="106"/>
    </location>
</feature>
<feature type="modified residue" description="N6-lipoyllysine" evidence="1">
    <location>
        <position position="65"/>
    </location>
</feature>
<proteinExistence type="inferred from homology"/>
<accession>B7K739</accession>
<evidence type="ECO:0000255" key="1">
    <source>
        <dbReference type="HAMAP-Rule" id="MF_00272"/>
    </source>
</evidence>
<evidence type="ECO:0000255" key="2">
    <source>
        <dbReference type="PROSITE-ProRule" id="PRU01066"/>
    </source>
</evidence>
<sequence>MEHEYPDDLRYLDSHEYVRLDGEIATIGISAFAIEQLGDIVFLELPEVGEAVEVGESFGHIESVKAVEDLYPPVSGTVIERNEAMIDSPELIGDDPYGEGWLLKLRVVNPDNELDDTLTADEYRSQVEGEA</sequence>
<organism>
    <name type="scientific">Gloeothece citriformis (strain PCC 7424)</name>
    <name type="common">Cyanothece sp. (strain PCC 7424)</name>
    <dbReference type="NCBI Taxonomy" id="65393"/>
    <lineage>
        <taxon>Bacteria</taxon>
        <taxon>Bacillati</taxon>
        <taxon>Cyanobacteriota</taxon>
        <taxon>Cyanophyceae</taxon>
        <taxon>Oscillatoriophycideae</taxon>
        <taxon>Chroococcales</taxon>
        <taxon>Aphanothecaceae</taxon>
        <taxon>Gloeothece</taxon>
        <taxon>Gloeothece citriformis</taxon>
    </lineage>
</organism>
<reference key="1">
    <citation type="journal article" date="2011" name="MBio">
        <title>Novel metabolic attributes of the genus Cyanothece, comprising a group of unicellular nitrogen-fixing Cyanobacteria.</title>
        <authorList>
            <person name="Bandyopadhyay A."/>
            <person name="Elvitigala T."/>
            <person name="Welsh E."/>
            <person name="Stockel J."/>
            <person name="Liberton M."/>
            <person name="Min H."/>
            <person name="Sherman L.A."/>
            <person name="Pakrasi H.B."/>
        </authorList>
    </citation>
    <scope>NUCLEOTIDE SEQUENCE [LARGE SCALE GENOMIC DNA]</scope>
    <source>
        <strain>PCC 7424</strain>
    </source>
</reference>
<keyword id="KW-0450">Lipoyl</keyword>
<keyword id="KW-1185">Reference proteome</keyword>
<name>GCSH_GLOC7</name>